<feature type="chain" id="PRO_0000338990" description="Mitotic-spindle organizing protein 2B">
    <location>
        <begin position="1"/>
        <end position="170"/>
    </location>
</feature>
<feature type="region of interest" description="Disordered" evidence="2">
    <location>
        <begin position="1"/>
        <end position="26"/>
    </location>
</feature>
<feature type="region of interest" description="Disordered" evidence="2">
    <location>
        <begin position="102"/>
        <end position="170"/>
    </location>
</feature>
<feature type="compositionally biased region" description="Low complexity" evidence="2">
    <location>
        <begin position="8"/>
        <end position="20"/>
    </location>
</feature>
<feature type="compositionally biased region" description="Polar residues" evidence="2">
    <location>
        <begin position="123"/>
        <end position="132"/>
    </location>
</feature>
<feature type="compositionally biased region" description="Low complexity" evidence="2">
    <location>
        <begin position="151"/>
        <end position="170"/>
    </location>
</feature>
<feature type="helix" evidence="4">
    <location>
        <begin position="47"/>
        <end position="58"/>
    </location>
</feature>
<feature type="helix" evidence="4">
    <location>
        <begin position="65"/>
        <end position="76"/>
    </location>
</feature>
<feature type="helix" evidence="4">
    <location>
        <begin position="81"/>
        <end position="90"/>
    </location>
</feature>
<evidence type="ECO:0000250" key="1"/>
<evidence type="ECO:0000256" key="2">
    <source>
        <dbReference type="SAM" id="MobiDB-lite"/>
    </source>
</evidence>
<evidence type="ECO:0000305" key="3"/>
<evidence type="ECO:0007829" key="4">
    <source>
        <dbReference type="PDB" id="7FAD"/>
    </source>
</evidence>
<name>MZT2B_XENTR</name>
<sequence>MSRGQTEGSQAMASSQAAGPGPSPDAIVSVSGTVQKYVAKKKKVLNPEEAELYELTQAAGIVIDQEVFKILVDLLKMNVAPLAVFQMLKSMCAGHRIADTVSADSSSISLAPGHSDVRGRNKPNPTTSTTQGPGERSSREGSSQRIPRQPSGSRMQKSSSSGKSSGGSST</sequence>
<protein>
    <recommendedName>
        <fullName>Mitotic-spindle organizing protein 2B</fullName>
    </recommendedName>
    <alternativeName>
        <fullName>Mitotic-spindle organizing protein associated with a ring of gamma-tubulin 2B</fullName>
    </alternativeName>
</protein>
<dbReference type="EMBL" id="CR855602">
    <property type="protein sequence ID" value="CAJ81722.1"/>
    <property type="molecule type" value="mRNA"/>
</dbReference>
<dbReference type="EMBL" id="BC155371">
    <property type="protein sequence ID" value="AAI55372.1"/>
    <property type="molecule type" value="mRNA"/>
</dbReference>
<dbReference type="RefSeq" id="NP_001039072.1">
    <property type="nucleotide sequence ID" value="NM_001045607.1"/>
</dbReference>
<dbReference type="PDB" id="7FAD">
    <property type="method" value="X-ray"/>
    <property type="resolution" value="3.20 A"/>
    <property type="chains" value="B/D/F=1-94"/>
</dbReference>
<dbReference type="PDBsum" id="7FAD"/>
<dbReference type="SMR" id="Q28DB1"/>
<dbReference type="FunCoup" id="Q28DB1">
    <property type="interactions" value="1319"/>
</dbReference>
<dbReference type="STRING" id="8364.ENSXETP00000000531"/>
<dbReference type="PaxDb" id="8364-ENSXETP00000018153"/>
<dbReference type="GeneID" id="733867"/>
<dbReference type="KEGG" id="xtr:733867"/>
<dbReference type="AGR" id="Xenbase:XB-GENE-5737867"/>
<dbReference type="CTD" id="80097"/>
<dbReference type="Xenbase" id="XB-GENE-5737867">
    <property type="gene designation" value="mzt2b"/>
</dbReference>
<dbReference type="eggNOG" id="ENOG502S50R">
    <property type="taxonomic scope" value="Eukaryota"/>
</dbReference>
<dbReference type="HOGENOM" id="CLU_105461_0_0_1"/>
<dbReference type="InParanoid" id="Q28DB1"/>
<dbReference type="OMA" id="MCAGQRA"/>
<dbReference type="OrthoDB" id="10064769at2759"/>
<dbReference type="PhylomeDB" id="Q28DB1"/>
<dbReference type="TreeFam" id="TF333013"/>
<dbReference type="Reactome" id="R-XTR-380270">
    <property type="pathway name" value="Recruitment of mitotic centrosome proteins and complexes"/>
</dbReference>
<dbReference type="Reactome" id="R-XTR-380320">
    <property type="pathway name" value="Recruitment of NuMA to mitotic centrosomes"/>
</dbReference>
<dbReference type="Proteomes" id="UP000008143">
    <property type="component" value="Chromosome 1"/>
</dbReference>
<dbReference type="Bgee" id="ENSXETG00000008275">
    <property type="expression patterns" value="Expressed in brain and 14 other cell types or tissues"/>
</dbReference>
<dbReference type="GO" id="GO:0005813">
    <property type="term" value="C:centrosome"/>
    <property type="evidence" value="ECO:0000250"/>
    <property type="project" value="UniProtKB"/>
</dbReference>
<dbReference type="GO" id="GO:0005737">
    <property type="term" value="C:cytoplasm"/>
    <property type="evidence" value="ECO:0007669"/>
    <property type="project" value="UniProtKB-KW"/>
</dbReference>
<dbReference type="GO" id="GO:0000931">
    <property type="term" value="C:gamma-tubulin ring complex"/>
    <property type="evidence" value="ECO:0000250"/>
    <property type="project" value="UniProtKB"/>
</dbReference>
<dbReference type="GO" id="GO:0005819">
    <property type="term" value="C:spindle"/>
    <property type="evidence" value="ECO:0000250"/>
    <property type="project" value="UniProtKB"/>
</dbReference>
<dbReference type="InterPro" id="IPR024332">
    <property type="entry name" value="MOZART2"/>
</dbReference>
<dbReference type="PANTHER" id="PTHR28578:SF2">
    <property type="entry name" value="MITOTIC-SPINDLE ORGANIZING PROTEIN 2"/>
    <property type="match status" value="1"/>
</dbReference>
<dbReference type="PANTHER" id="PTHR28578">
    <property type="entry name" value="MITOTIC-SPINDLE ORGANIZING PROTEIN 2A-RELATED"/>
    <property type="match status" value="1"/>
</dbReference>
<dbReference type="Pfam" id="PF12926">
    <property type="entry name" value="MOZART2"/>
    <property type="match status" value="1"/>
</dbReference>
<proteinExistence type="evidence at protein level"/>
<accession>Q28DB1</accession>
<organism>
    <name type="scientific">Xenopus tropicalis</name>
    <name type="common">Western clawed frog</name>
    <name type="synonym">Silurana tropicalis</name>
    <dbReference type="NCBI Taxonomy" id="8364"/>
    <lineage>
        <taxon>Eukaryota</taxon>
        <taxon>Metazoa</taxon>
        <taxon>Chordata</taxon>
        <taxon>Craniata</taxon>
        <taxon>Vertebrata</taxon>
        <taxon>Euteleostomi</taxon>
        <taxon>Amphibia</taxon>
        <taxon>Batrachia</taxon>
        <taxon>Anura</taxon>
        <taxon>Pipoidea</taxon>
        <taxon>Pipidae</taxon>
        <taxon>Xenopodinae</taxon>
        <taxon>Xenopus</taxon>
        <taxon>Silurana</taxon>
    </lineage>
</organism>
<gene>
    <name type="primary">mzt2b</name>
    <name type="synonym">fam128</name>
    <name type="synonym">mozart2</name>
    <name type="ORF">TEgg010b01.1</name>
</gene>
<keyword id="KW-0002">3D-structure</keyword>
<keyword id="KW-0963">Cytoplasm</keyword>
<keyword id="KW-0206">Cytoskeleton</keyword>
<keyword id="KW-1185">Reference proteome</keyword>
<comment type="subunit">
    <text evidence="1">Part of the gamma-tubulin complex. Interacts with TUBG1 (By similarity).</text>
</comment>
<comment type="subcellular location">
    <subcellularLocation>
        <location evidence="1">Cytoplasm</location>
        <location evidence="1">Cytoskeleton</location>
        <location evidence="1">Microtubule organizing center</location>
        <location evidence="1">Centrosome</location>
    </subcellularLocation>
    <subcellularLocation>
        <location evidence="1">Cytoplasm</location>
        <location evidence="1">Cytoskeleton</location>
        <location evidence="1">Spindle</location>
    </subcellularLocation>
</comment>
<comment type="similarity">
    <text evidence="3">Belongs to the MOZART2 family.</text>
</comment>
<reference key="1">
    <citation type="submission" date="2006-10" db="EMBL/GenBank/DDBJ databases">
        <authorList>
            <consortium name="Sanger Xenopus tropicalis EST/cDNA project"/>
        </authorList>
    </citation>
    <scope>NUCLEOTIDE SEQUENCE [LARGE SCALE MRNA]</scope>
    <source>
        <tissue>Egg</tissue>
    </source>
</reference>
<reference key="2">
    <citation type="submission" date="2007-11" db="EMBL/GenBank/DDBJ databases">
        <authorList>
            <consortium name="NIH - Xenopus Gene Collection (XGC) project"/>
        </authorList>
    </citation>
    <scope>NUCLEOTIDE SEQUENCE [LARGE SCALE MRNA]</scope>
    <source>
        <strain>N6</strain>
        <tissue>Ovary</tissue>
    </source>
</reference>